<protein>
    <recommendedName>
        <fullName>Nucleolar protein 9</fullName>
    </recommendedName>
    <alternativeName>
        <fullName>Pumilio domain-containing protein NOP9</fullName>
    </alternativeName>
</protein>
<reference key="1">
    <citation type="journal article" date="2007" name="Plant Cell">
        <title>Dothideomycete-plant interactions illuminated by genome sequencing and EST analysis of the wheat pathogen Stagonospora nodorum.</title>
        <authorList>
            <person name="Hane J.K."/>
            <person name="Lowe R.G.T."/>
            <person name="Solomon P.S."/>
            <person name="Tan K.-C."/>
            <person name="Schoch C.L."/>
            <person name="Spatafora J.W."/>
            <person name="Crous P.W."/>
            <person name="Kodira C.D."/>
            <person name="Birren B.W."/>
            <person name="Galagan J.E."/>
            <person name="Torriani S.F.F."/>
            <person name="McDonald B.A."/>
            <person name="Oliver R.P."/>
        </authorList>
    </citation>
    <scope>NUCLEOTIDE SEQUENCE [LARGE SCALE GENOMIC DNA]</scope>
    <source>
        <strain>SN15 / ATCC MYA-4574 / FGSC 10173</strain>
    </source>
</reference>
<dbReference type="EMBL" id="CH445356">
    <property type="protein sequence ID" value="EAT78107.1"/>
    <property type="molecule type" value="Genomic_DNA"/>
</dbReference>
<dbReference type="RefSeq" id="XP_001804749.1">
    <property type="nucleotide sequence ID" value="XM_001804697.1"/>
</dbReference>
<dbReference type="SMR" id="Q0U154"/>
<dbReference type="FunCoup" id="Q0U154">
    <property type="interactions" value="830"/>
</dbReference>
<dbReference type="STRING" id="321614.Q0U154"/>
<dbReference type="EnsemblFungi" id="SNOT_14567">
    <property type="protein sequence ID" value="SNOT_14567"/>
    <property type="gene ID" value="SNOG_14567"/>
</dbReference>
<dbReference type="GeneID" id="5981674"/>
<dbReference type="KEGG" id="pno:SNOG_14567"/>
<dbReference type="VEuPathDB" id="FungiDB:JI435_145670"/>
<dbReference type="eggNOG" id="KOG2188">
    <property type="taxonomic scope" value="Eukaryota"/>
</dbReference>
<dbReference type="HOGENOM" id="CLU_008720_1_1_1"/>
<dbReference type="InParanoid" id="Q0U154"/>
<dbReference type="OMA" id="HHLVRNF"/>
<dbReference type="OrthoDB" id="392571at2759"/>
<dbReference type="Proteomes" id="UP000001055">
    <property type="component" value="Unassembled WGS sequence"/>
</dbReference>
<dbReference type="GO" id="GO:0030686">
    <property type="term" value="C:90S preribosome"/>
    <property type="evidence" value="ECO:0000318"/>
    <property type="project" value="GO_Central"/>
</dbReference>
<dbReference type="GO" id="GO:0005730">
    <property type="term" value="C:nucleolus"/>
    <property type="evidence" value="ECO:0000318"/>
    <property type="project" value="GO_Central"/>
</dbReference>
<dbReference type="GO" id="GO:0030688">
    <property type="term" value="C:preribosome, small subunit precursor"/>
    <property type="evidence" value="ECO:0000318"/>
    <property type="project" value="GO_Central"/>
</dbReference>
<dbReference type="GO" id="GO:0003723">
    <property type="term" value="F:RNA binding"/>
    <property type="evidence" value="ECO:0000318"/>
    <property type="project" value="GO_Central"/>
</dbReference>
<dbReference type="GO" id="GO:0000480">
    <property type="term" value="P:endonucleolytic cleavage in 5'-ETS of tricistronic rRNA transcript (SSU-rRNA, 5.8S rRNA, LSU-rRNA)"/>
    <property type="evidence" value="ECO:0000318"/>
    <property type="project" value="GO_Central"/>
</dbReference>
<dbReference type="GO" id="GO:0000447">
    <property type="term" value="P:endonucleolytic cleavage in ITS1 to separate SSU-rRNA from 5.8S rRNA and LSU-rRNA from tricistronic rRNA transcript (SSU-rRNA, 5.8S rRNA, LSU-rRNA)"/>
    <property type="evidence" value="ECO:0000318"/>
    <property type="project" value="GO_Central"/>
</dbReference>
<dbReference type="GO" id="GO:0000472">
    <property type="term" value="P:endonucleolytic cleavage to generate mature 5'-end of SSU-rRNA from (SSU-rRNA, 5.8S rRNA, LSU-rRNA)"/>
    <property type="evidence" value="ECO:0000318"/>
    <property type="project" value="GO_Central"/>
</dbReference>
<dbReference type="GO" id="GO:0000056">
    <property type="term" value="P:ribosomal small subunit export from nucleus"/>
    <property type="evidence" value="ECO:0000318"/>
    <property type="project" value="GO_Central"/>
</dbReference>
<dbReference type="Gene3D" id="1.25.10.10">
    <property type="entry name" value="Leucine-rich Repeat Variant"/>
    <property type="match status" value="2"/>
</dbReference>
<dbReference type="InterPro" id="IPR011989">
    <property type="entry name" value="ARM-like"/>
</dbReference>
<dbReference type="InterPro" id="IPR016024">
    <property type="entry name" value="ARM-type_fold"/>
</dbReference>
<dbReference type="InterPro" id="IPR040000">
    <property type="entry name" value="NOP9"/>
</dbReference>
<dbReference type="InterPro" id="IPR001313">
    <property type="entry name" value="Pumilio_RNA-bd_rpt"/>
</dbReference>
<dbReference type="PANTHER" id="PTHR13102">
    <property type="entry name" value="NUCLEOLAR PROTEIN 9"/>
    <property type="match status" value="1"/>
</dbReference>
<dbReference type="PANTHER" id="PTHR13102:SF0">
    <property type="entry name" value="NUCLEOLAR PROTEIN 9"/>
    <property type="match status" value="1"/>
</dbReference>
<dbReference type="Pfam" id="PF22493">
    <property type="entry name" value="PUF_NOP9"/>
    <property type="match status" value="1"/>
</dbReference>
<dbReference type="SMART" id="SM00025">
    <property type="entry name" value="Pumilio"/>
    <property type="match status" value="5"/>
</dbReference>
<dbReference type="SUPFAM" id="SSF48371">
    <property type="entry name" value="ARM repeat"/>
    <property type="match status" value="1"/>
</dbReference>
<feature type="chain" id="PRO_0000407826" description="Nucleolar protein 9">
    <location>
        <begin position="1"/>
        <end position="726"/>
    </location>
</feature>
<feature type="repeat" description="Pumilio 1">
    <location>
        <begin position="103"/>
        <end position="138"/>
    </location>
</feature>
<feature type="repeat" description="Pumilio 2">
    <location>
        <begin position="139"/>
        <end position="174"/>
    </location>
</feature>
<feature type="repeat" description="Pumilio 3">
    <location>
        <begin position="203"/>
        <end position="244"/>
    </location>
</feature>
<feature type="repeat" description="Pumilio 4">
    <location>
        <begin position="343"/>
        <end position="378"/>
    </location>
</feature>
<feature type="repeat" description="Pumilio 5">
    <location>
        <begin position="379"/>
        <end position="419"/>
    </location>
</feature>
<feature type="repeat" description="Pumilio 6">
    <location>
        <begin position="519"/>
        <end position="557"/>
    </location>
</feature>
<feature type="repeat" description="Pumilio 7">
    <location>
        <begin position="558"/>
        <end position="595"/>
    </location>
</feature>
<feature type="region of interest" description="Disordered" evidence="2">
    <location>
        <begin position="1"/>
        <end position="52"/>
    </location>
</feature>
<feature type="region of interest" description="Disordered" evidence="2">
    <location>
        <begin position="640"/>
        <end position="726"/>
    </location>
</feature>
<feature type="compositionally biased region" description="Basic and acidic residues" evidence="2">
    <location>
        <begin position="10"/>
        <end position="35"/>
    </location>
</feature>
<feature type="compositionally biased region" description="Polar residues" evidence="2">
    <location>
        <begin position="640"/>
        <end position="667"/>
    </location>
</feature>
<feature type="compositionally biased region" description="Basic and acidic residues" evidence="2">
    <location>
        <begin position="685"/>
        <end position="700"/>
    </location>
</feature>
<feature type="compositionally biased region" description="Basic and acidic residues" evidence="2">
    <location>
        <begin position="706"/>
        <end position="726"/>
    </location>
</feature>
<evidence type="ECO:0000250" key="1"/>
<evidence type="ECO:0000256" key="2">
    <source>
        <dbReference type="SAM" id="MobiDB-lite"/>
    </source>
</evidence>
<evidence type="ECO:0000305" key="3"/>
<proteinExistence type="inferred from homology"/>
<gene>
    <name type="primary">NOP9</name>
    <name type="ORF">SNOG_14567</name>
</gene>
<keyword id="KW-0539">Nucleus</keyword>
<keyword id="KW-0677">Repeat</keyword>
<keyword id="KW-0690">Ribosome biogenesis</keyword>
<keyword id="KW-0698">rRNA processing</keyword>
<accession>Q0U154</accession>
<sequence length="726" mass="81727">MPKEHKKRGRREEQKKRKRDHDHVDAAPKRLKKEDDVELESIENGEAFHHEPVDVTRPGELTYYGMLDDEEQEYFKRADEMLELNQFEDPEARNLFLASVYKEADGKELKIANSQSCSRLLERLILLSSPDQLKNLFQKFNGHFLNLVQHRFASHCCEALFIHAAPVVTLELAEPQTLQTPPSSDPNAIIVSMESLFLYTLAELEEHLGYLMTDRFASHVLRVLLVVLSGAPLAKENKNKSVLQSKRKEKVGIAGTERGQDWVLEKRPVPKSFLEALEKTINASASTLDTANLRLLATHPLGNPTLQLLLKLELAHFGKSRAKDENSIIHKMLPDDPIAEGTESAAFINGLVYDPIGSRLLETIIESAPGKLFKQIYSEFFKERMGSLSRNEIAGYVAGKILERLGKDDLDEAMRQIVEQIPNLVERNRTAIIKTLLERCIARNVDISLIKDQLEAVYSGPNGFEVTRILRVSESPAENLKQNGKQDHSPEKVHGSLLAQTMMAVDGPLGDLIFDSLAKLTPELSVQLARDPTASRTLQAALTAEHASVIFRRKMIQQFYGHVGELALDPAASRVIDAVWHGTHGLAFIRERIAEELAENENSLRESFVGRAVWRNWRMDLYKRKRGDWVKQSKYTAGNDGFQSFPESNGESSTTPPHRQSHAQNQRGGKHMSAIELARQKHAAKAVEAKKREAQTDKKMKREKKDKHVGVAESSKGKEKASVVAQ</sequence>
<comment type="function">
    <text evidence="1">RNA-binding nucleolar protein required for pre-rRNA processing. Involved in production of 18S rRNA and assembly of small ribosomal subunit (By similarity).</text>
</comment>
<comment type="subcellular location">
    <subcellularLocation>
        <location evidence="1">Nucleus</location>
        <location evidence="1">Nucleolus</location>
    </subcellularLocation>
</comment>
<comment type="similarity">
    <text evidence="3">Belongs to the NOP9 family.</text>
</comment>
<name>NOP9_PHANO</name>
<organism>
    <name type="scientific">Phaeosphaeria nodorum (strain SN15 / ATCC MYA-4574 / FGSC 10173)</name>
    <name type="common">Glume blotch fungus</name>
    <name type="synonym">Parastagonospora nodorum</name>
    <dbReference type="NCBI Taxonomy" id="321614"/>
    <lineage>
        <taxon>Eukaryota</taxon>
        <taxon>Fungi</taxon>
        <taxon>Dikarya</taxon>
        <taxon>Ascomycota</taxon>
        <taxon>Pezizomycotina</taxon>
        <taxon>Dothideomycetes</taxon>
        <taxon>Pleosporomycetidae</taxon>
        <taxon>Pleosporales</taxon>
        <taxon>Pleosporineae</taxon>
        <taxon>Phaeosphaeriaceae</taxon>
        <taxon>Parastagonospora</taxon>
    </lineage>
</organism>